<evidence type="ECO:0000255" key="1"/>
<evidence type="ECO:0000256" key="2">
    <source>
        <dbReference type="SAM" id="MobiDB-lite"/>
    </source>
</evidence>
<evidence type="ECO:0000269" key="3">
    <source>
    </source>
</evidence>
<evidence type="ECO:0000305" key="4"/>
<evidence type="ECO:0000305" key="5">
    <source>
    </source>
</evidence>
<evidence type="ECO:0000312" key="6">
    <source>
        <dbReference type="Proteomes" id="UP000001940"/>
    </source>
</evidence>
<evidence type="ECO:0000312" key="7">
    <source>
        <dbReference type="WormBase" id="T05C12.10"/>
    </source>
</evidence>
<proteinExistence type="evidence at transcript level"/>
<comment type="function">
    <text evidence="3">Required for cuticle shedding and normal alae morphology and localization, and subsequently larval development.</text>
</comment>
<comment type="subcellular location">
    <subcellularLocation>
        <location evidence="3">Cytoplasmic vesicle</location>
    </subcellularLocation>
    <subcellularLocation>
        <location evidence="3">Secreted</location>
    </subcellularLocation>
    <subcellularLocation>
        <location evidence="5">Secreted</location>
        <location evidence="5">Extracellular space</location>
        <location evidence="5">Extracellular matrix</location>
    </subcellularLocation>
    <text evidence="5">Secreted by the underlying hypodermis.</text>
</comment>
<comment type="tissue specificity">
    <text evidence="3">Transiently expressed in head cells.</text>
</comment>
<comment type="developmental stage">
    <text evidence="3">Mainly expressed in all hypodermal cells (hyp1 to hyp11) from the tip of the head to the tip of the tail from late embryogenesis to adulthood, and expressed in the excretory duct and pore cells from the 3-fold stage of embryogenesis to adulthood. Expressed in intestinal and rectal cells, sensilla support cells, and transiently in the P lineage during the L1 stage of larval development. Temporal expression during the molt phases from larval development stage L2 to L4 with high expression prior to and during the L2 and L3 molt, but low expression between the molting phases, and low expression after the L4 molt.</text>
</comment>
<reference evidence="6" key="1">
    <citation type="journal article" date="1998" name="Science">
        <title>Genome sequence of the nematode C. elegans: a platform for investigating biology.</title>
        <authorList>
            <consortium name="The C. elegans sequencing consortium"/>
        </authorList>
    </citation>
    <scope>NUCLEOTIDE SEQUENCE [LARGE SCALE GENOMIC DNA]</scope>
    <source>
        <strain evidence="6">Bristol N2</strain>
    </source>
</reference>
<reference evidence="4" key="2">
    <citation type="journal article" date="2006" name="Dev. Dyn.">
        <title>The hedgehog-related gene qua-1 is required for molting in Caenorhabditis elegans.</title>
        <authorList>
            <person name="Hao L."/>
            <person name="Mukherjee K."/>
            <person name="Liegeois S."/>
            <person name="Baillie D."/>
            <person name="Labouesse M."/>
            <person name="Buerglin T.R."/>
        </authorList>
    </citation>
    <scope>FUNCTION</scope>
    <scope>SUBCELLULAR LOCATION</scope>
    <scope>TISSUE SPECIFICITY</scope>
    <scope>DEVELOPMENTAL STAGE</scope>
</reference>
<keyword id="KW-0968">Cytoplasmic vesicle</keyword>
<keyword id="KW-0217">Developmental protein</keyword>
<keyword id="KW-0272">Extracellular matrix</keyword>
<keyword id="KW-1185">Reference proteome</keyword>
<keyword id="KW-0964">Secreted</keyword>
<keyword id="KW-0732">Signal</keyword>
<accession>G5EC21</accession>
<organism evidence="6">
    <name type="scientific">Caenorhabditis elegans</name>
    <dbReference type="NCBI Taxonomy" id="6239"/>
    <lineage>
        <taxon>Eukaryota</taxon>
        <taxon>Metazoa</taxon>
        <taxon>Ecdysozoa</taxon>
        <taxon>Nematoda</taxon>
        <taxon>Chromadorea</taxon>
        <taxon>Rhabditida</taxon>
        <taxon>Rhabditina</taxon>
        <taxon>Rhabditomorpha</taxon>
        <taxon>Rhabditoidea</taxon>
        <taxon>Rhabditidae</taxon>
        <taxon>Peloderinae</taxon>
        <taxon>Caenorhabditis</taxon>
    </lineage>
</organism>
<gene>
    <name evidence="7" type="primary">qua-1</name>
    <name evidence="7" type="ORF">T05C12.10</name>
</gene>
<sequence>MRRLSAILPILLLSNFWPTVESLNYKCHNDQILVVQSFGNDTIRMHCQRLDLCGYQKLKCDYDELQPQCGGKLNFVSHVNQKGSTAPVEHTCCNLFNPRSHHSIPTHIGNDCFIYELPDGSSNGKKVDPAPADDAPYAVLKNPAEIPEQFDGVTGYRLRLFLLKNKSPPTLLVKGIERRLDGYRVTICRPRCTSYDKVVNDNEGAEDGEWKAISWSSWSSSSWSTWARHAFNKAAAEGGEAAERIRTRMPIGEKTVAGAAGATGAAGSDKSNINIHVESNGNNNNSFEGGRSSSEKSDGQLNREISGSSEAGAGGKGGAGADGAAGSGAGAGAGAGTNGNINITVHTDGKSGGNAVAVANANVTVNGAGGVSTTGTGAQTGNESGLGGSAGTDKAGGKKGGHGDSGDSGNNKNKDNGKGKGKGKNDEEDEEDNGDEDGNGKGGNGGNPKGEWDDGDGDEDDDGTDGGSKESGNNGKGKGKGSGDGDGNRNGNGDGNGRPKGDGNIKINIHSPDDNDLLEKDENGPNGKGGAGNGNGDGDKDNNGKGNGTGDGDGDGNGNGNGLTGDGNGTGDGDNNESGNGNGDGSDKNSGAGAGTKPENREGGDGNGNGTGDGNGDGNDNGNGSKGLGTGSGDGKGEGNKSGTPGKSDGKEDGAGSNGSGNGKEGDGNKSGGSGKGGAGNGKSGDGSGDGKNNGNGGTGDGKDKNGKGSGSGDNDKSGTRAAGKGNAEGNGKGNGNDGKGSGSGDGSGAGGKGDKSDSESGNEADGKDGKKNEGAGGEAAAGSGGANKGGSDGDDDDVDVTDVEVGTKPLTGTKLEELLAKLPNETADGNATGDGNEFGTVQTGAKHNAESSASGIPLVQARSNTVNGGAPVPPAPGSGATGSGTSGSGTSESVTNGSGATESGSTGSGTTGTGTSGTGSSGTGASAARTSSIAGDAPQAAVLADTPGAAGAAGGGRSNCFSADSLVTTVTGQKRMDELQIGDYVLVPSSGNVLKYEKVEMFYHREPKTRTNFVVLYTKSGRKLSLTGRHLLPVAECSQVEQYTMNPDGIDVAMRESKYAEKARKGECVLSIDESGEVIADEIVRVGRMTNVGIYSPMTVEGSLIVDGVLSSCFSHLESHSAHKLIFDFIYYVYNAFGLLNTNHVDLQPIPTFVSFAQYLSKTVLPFS</sequence>
<feature type="signal peptide" evidence="1">
    <location>
        <begin position="1"/>
        <end position="22"/>
    </location>
</feature>
<feature type="chain" id="PRO_5003475859" description="Protein qua-1" evidence="4">
    <location>
        <begin position="23"/>
        <end position="1169"/>
    </location>
</feature>
<feature type="region of interest" description="Disordered" evidence="2">
    <location>
        <begin position="261"/>
        <end position="338"/>
    </location>
</feature>
<feature type="region of interest" description="Disordered" evidence="2">
    <location>
        <begin position="368"/>
        <end position="933"/>
    </location>
</feature>
<feature type="compositionally biased region" description="Low complexity" evidence="2">
    <location>
        <begin position="278"/>
        <end position="292"/>
    </location>
</feature>
<feature type="compositionally biased region" description="Gly residues" evidence="2">
    <location>
        <begin position="312"/>
        <end position="337"/>
    </location>
</feature>
<feature type="compositionally biased region" description="Acidic residues" evidence="2">
    <location>
        <begin position="426"/>
        <end position="437"/>
    </location>
</feature>
<feature type="compositionally biased region" description="Acidic residues" evidence="2">
    <location>
        <begin position="453"/>
        <end position="464"/>
    </location>
</feature>
<feature type="compositionally biased region" description="Basic and acidic residues" evidence="2">
    <location>
        <begin position="511"/>
        <end position="523"/>
    </location>
</feature>
<feature type="compositionally biased region" description="Gly residues" evidence="2">
    <location>
        <begin position="526"/>
        <end position="536"/>
    </location>
</feature>
<feature type="compositionally biased region" description="Gly residues" evidence="2">
    <location>
        <begin position="545"/>
        <end position="572"/>
    </location>
</feature>
<feature type="compositionally biased region" description="Gly residues" evidence="2">
    <location>
        <begin position="605"/>
        <end position="634"/>
    </location>
</feature>
<feature type="compositionally biased region" description="Gly residues" evidence="2">
    <location>
        <begin position="656"/>
        <end position="700"/>
    </location>
</feature>
<feature type="compositionally biased region" description="Gly residues" evidence="2">
    <location>
        <begin position="727"/>
        <end position="752"/>
    </location>
</feature>
<feature type="compositionally biased region" description="Basic and acidic residues" evidence="2">
    <location>
        <begin position="753"/>
        <end position="774"/>
    </location>
</feature>
<feature type="compositionally biased region" description="Gly residues" evidence="2">
    <location>
        <begin position="775"/>
        <end position="791"/>
    </location>
</feature>
<feature type="compositionally biased region" description="Acidic residues" evidence="2">
    <location>
        <begin position="793"/>
        <end position="803"/>
    </location>
</feature>
<feature type="compositionally biased region" description="Polar residues" evidence="2">
    <location>
        <begin position="840"/>
        <end position="855"/>
    </location>
</feature>
<feature type="compositionally biased region" description="Low complexity" evidence="2">
    <location>
        <begin position="889"/>
        <end position="906"/>
    </location>
</feature>
<feature type="compositionally biased region" description="Gly residues" evidence="2">
    <location>
        <begin position="907"/>
        <end position="923"/>
    </location>
</feature>
<feature type="compositionally biased region" description="Low complexity" evidence="2">
    <location>
        <begin position="924"/>
        <end position="933"/>
    </location>
</feature>
<dbReference type="EMBL" id="BX284602">
    <property type="protein sequence ID" value="CAA91313.2"/>
    <property type="molecule type" value="Genomic_DNA"/>
</dbReference>
<dbReference type="PIR" id="T23754">
    <property type="entry name" value="T23754"/>
</dbReference>
<dbReference type="RefSeq" id="NP_495725.2">
    <property type="nucleotide sequence ID" value="NM_063324.5"/>
</dbReference>
<dbReference type="SMR" id="G5EC21"/>
<dbReference type="FunCoup" id="G5EC21">
    <property type="interactions" value="51"/>
</dbReference>
<dbReference type="STRING" id="6239.T05C12.10.1"/>
<dbReference type="MEROPS" id="C46.A05"/>
<dbReference type="PaxDb" id="6239-T05C12.10"/>
<dbReference type="PeptideAtlas" id="G5EC21"/>
<dbReference type="EnsemblMetazoa" id="T05C12.10.1">
    <property type="protein sequence ID" value="T05C12.10.1"/>
    <property type="gene ID" value="WBGene00004264"/>
</dbReference>
<dbReference type="GeneID" id="174319"/>
<dbReference type="KEGG" id="cel:CELE_T05C12.10"/>
<dbReference type="AGR" id="WB:WBGene00004264"/>
<dbReference type="CTD" id="174319"/>
<dbReference type="WormBase" id="T05C12.10">
    <property type="protein sequence ID" value="CE34989"/>
    <property type="gene ID" value="WBGene00004264"/>
    <property type="gene designation" value="qua-1"/>
</dbReference>
<dbReference type="eggNOG" id="KOG3638">
    <property type="taxonomic scope" value="Eukaryota"/>
</dbReference>
<dbReference type="HOGENOM" id="CLU_267484_0_0_1"/>
<dbReference type="InParanoid" id="G5EC21"/>
<dbReference type="OMA" id="FGHEFGL"/>
<dbReference type="OrthoDB" id="5212at2759"/>
<dbReference type="PRO" id="PR:G5EC21"/>
<dbReference type="Proteomes" id="UP000001940">
    <property type="component" value="Chromosome II"/>
</dbReference>
<dbReference type="Bgee" id="WBGene00004264">
    <property type="expression patterns" value="Expressed in larva and 4 other cell types or tissues"/>
</dbReference>
<dbReference type="GO" id="GO:0060102">
    <property type="term" value="C:cuticular extracellular matrix"/>
    <property type="evidence" value="ECO:0000314"/>
    <property type="project" value="WormBase"/>
</dbReference>
<dbReference type="GO" id="GO:0031410">
    <property type="term" value="C:cytoplasmic vesicle"/>
    <property type="evidence" value="ECO:0007669"/>
    <property type="project" value="UniProtKB-KW"/>
</dbReference>
<dbReference type="GO" id="GO:0031012">
    <property type="term" value="C:extracellular matrix"/>
    <property type="evidence" value="ECO:0000318"/>
    <property type="project" value="GO_Central"/>
</dbReference>
<dbReference type="GO" id="GO:0005576">
    <property type="term" value="C:extracellular region"/>
    <property type="evidence" value="ECO:0007669"/>
    <property type="project" value="UniProtKB-SubCell"/>
</dbReference>
<dbReference type="GO" id="GO:0007267">
    <property type="term" value="P:cell-cell signaling"/>
    <property type="evidence" value="ECO:0007669"/>
    <property type="project" value="InterPro"/>
</dbReference>
<dbReference type="GO" id="GO:0016539">
    <property type="term" value="P:intein-mediated protein splicing"/>
    <property type="evidence" value="ECO:0007669"/>
    <property type="project" value="InterPro"/>
</dbReference>
<dbReference type="GO" id="GO:0018996">
    <property type="term" value="P:molting cycle, collagen and cuticulin-based cuticle"/>
    <property type="evidence" value="ECO:0000315"/>
    <property type="project" value="WormBase"/>
</dbReference>
<dbReference type="GO" id="GO:0002119">
    <property type="term" value="P:nematode larval development"/>
    <property type="evidence" value="ECO:0000315"/>
    <property type="project" value="WormBase"/>
</dbReference>
<dbReference type="GO" id="GO:0090597">
    <property type="term" value="P:nematode male tail mating organ morphogenesis"/>
    <property type="evidence" value="ECO:0000315"/>
    <property type="project" value="WormBase"/>
</dbReference>
<dbReference type="GO" id="GO:0016540">
    <property type="term" value="P:protein autoprocessing"/>
    <property type="evidence" value="ECO:0007669"/>
    <property type="project" value="InterPro"/>
</dbReference>
<dbReference type="CDD" id="cd00081">
    <property type="entry name" value="Hint"/>
    <property type="match status" value="1"/>
</dbReference>
<dbReference type="FunFam" id="2.170.16.10:FF:000016">
    <property type="entry name" value="GRounDhog (Hedgehog-like family)"/>
    <property type="match status" value="1"/>
</dbReference>
<dbReference type="Gene3D" id="2.170.16.10">
    <property type="entry name" value="Hedgehog/Intein (Hint) domain"/>
    <property type="match status" value="1"/>
</dbReference>
<dbReference type="InterPro" id="IPR052140">
    <property type="entry name" value="Dev_Signal_Hedgehog-like"/>
</dbReference>
<dbReference type="InterPro" id="IPR001657">
    <property type="entry name" value="Hedgehog"/>
</dbReference>
<dbReference type="InterPro" id="IPR001767">
    <property type="entry name" value="Hedgehog_Hint"/>
</dbReference>
<dbReference type="InterPro" id="IPR003586">
    <property type="entry name" value="Hint_dom_C"/>
</dbReference>
<dbReference type="InterPro" id="IPR003587">
    <property type="entry name" value="Hint_dom_N"/>
</dbReference>
<dbReference type="InterPro" id="IPR036844">
    <property type="entry name" value="Hint_dom_sf"/>
</dbReference>
<dbReference type="InterPro" id="IPR006141">
    <property type="entry name" value="Intein_N"/>
</dbReference>
<dbReference type="PANTHER" id="PTHR46706">
    <property type="entry name" value="PROTEIN QUA-1-RELATED"/>
    <property type="match status" value="1"/>
</dbReference>
<dbReference type="PANTHER" id="PTHR46706:SF12">
    <property type="entry name" value="PROTEIN QUA-1-RELATED"/>
    <property type="match status" value="1"/>
</dbReference>
<dbReference type="Pfam" id="PF01079">
    <property type="entry name" value="Hint"/>
    <property type="match status" value="1"/>
</dbReference>
<dbReference type="PRINTS" id="PR00632">
    <property type="entry name" value="SONICHHOG"/>
</dbReference>
<dbReference type="SMART" id="SM00305">
    <property type="entry name" value="HintC"/>
    <property type="match status" value="1"/>
</dbReference>
<dbReference type="SMART" id="SM00306">
    <property type="entry name" value="HintN"/>
    <property type="match status" value="1"/>
</dbReference>
<dbReference type="SUPFAM" id="SSF51294">
    <property type="entry name" value="Hedgehog/intein (Hint) domain"/>
    <property type="match status" value="1"/>
</dbReference>
<dbReference type="PROSITE" id="PS50817">
    <property type="entry name" value="INTEIN_N_TER"/>
    <property type="match status" value="1"/>
</dbReference>
<name>QUA1_CAEEL</name>
<protein>
    <recommendedName>
        <fullName evidence="4">Protein qua-1</fullName>
    </recommendedName>
</protein>